<sequence length="62" mass="7218">LNCHNQMSAQPPTTTRCSRWETNCYKKRWRDHRGYKTERGCGCPTVKKGIQLHCCTSDNCNN</sequence>
<name>3S13_NAJMO</name>
<organism>
    <name type="scientific">Naja mossambica</name>
    <name type="common">Mozambique spitting cobra</name>
    <dbReference type="NCBI Taxonomy" id="8644"/>
    <lineage>
        <taxon>Eukaryota</taxon>
        <taxon>Metazoa</taxon>
        <taxon>Chordata</taxon>
        <taxon>Craniata</taxon>
        <taxon>Vertebrata</taxon>
        <taxon>Euteleostomi</taxon>
        <taxon>Lepidosauria</taxon>
        <taxon>Squamata</taxon>
        <taxon>Bifurcata</taxon>
        <taxon>Unidentata</taxon>
        <taxon>Episquamata</taxon>
        <taxon>Toxicofera</taxon>
        <taxon>Serpentes</taxon>
        <taxon>Colubroidea</taxon>
        <taxon>Elapidae</taxon>
        <taxon>Elapinae</taxon>
        <taxon>Naja</taxon>
    </lineage>
</organism>
<accession>P01432</accession>
<proteinExistence type="evidence at protein level"/>
<comment type="function">
    <text evidence="2">Binds to muscle nicotinic acetylcholine receptor (nAChR) and inhibit acetylcholine from binding to the receptor, thereby impairing neuromuscular transmission.</text>
</comment>
<comment type="subcellular location">
    <subcellularLocation>
        <location evidence="3">Secreted</location>
    </subcellularLocation>
</comment>
<comment type="tissue specificity">
    <text evidence="4">Expressed by the venom gland.</text>
</comment>
<comment type="toxic dose">
    <text>LD(50) is 0.05 mg/kg by subcutaneous injection.</text>
</comment>
<comment type="similarity">
    <text evidence="4">Belongs to the three-finger toxin family. Short-chain subfamily. Type I alpha-neurotoxin sub-subfamily.</text>
</comment>
<protein>
    <recommendedName>
        <fullName>Short neurotoxin 3</fullName>
    </recommendedName>
    <alternativeName>
        <fullName>NMM III</fullName>
    </alternativeName>
    <alternativeName>
        <fullName>Neurotoxin III</fullName>
    </alternativeName>
</protein>
<keyword id="KW-0008">Acetylcholine receptor inhibiting toxin</keyword>
<keyword id="KW-0903">Direct protein sequencing</keyword>
<keyword id="KW-1015">Disulfide bond</keyword>
<keyword id="KW-0872">Ion channel impairing toxin</keyword>
<keyword id="KW-0528">Neurotoxin</keyword>
<keyword id="KW-0629">Postsynaptic neurotoxin</keyword>
<keyword id="KW-0964">Secreted</keyword>
<keyword id="KW-0800">Toxin</keyword>
<dbReference type="PIR" id="A01700">
    <property type="entry name" value="N1NJ3M"/>
</dbReference>
<dbReference type="SMR" id="P01432"/>
<dbReference type="GO" id="GO:0005576">
    <property type="term" value="C:extracellular region"/>
    <property type="evidence" value="ECO:0007669"/>
    <property type="project" value="UniProtKB-SubCell"/>
</dbReference>
<dbReference type="GO" id="GO:0030550">
    <property type="term" value="F:acetylcholine receptor inhibitor activity"/>
    <property type="evidence" value="ECO:0007669"/>
    <property type="project" value="UniProtKB-KW"/>
</dbReference>
<dbReference type="GO" id="GO:0099106">
    <property type="term" value="F:ion channel regulator activity"/>
    <property type="evidence" value="ECO:0007669"/>
    <property type="project" value="UniProtKB-KW"/>
</dbReference>
<dbReference type="GO" id="GO:0090729">
    <property type="term" value="F:toxin activity"/>
    <property type="evidence" value="ECO:0007669"/>
    <property type="project" value="UniProtKB-KW"/>
</dbReference>
<dbReference type="CDD" id="cd00206">
    <property type="entry name" value="TFP_snake_toxin"/>
    <property type="match status" value="1"/>
</dbReference>
<dbReference type="FunFam" id="2.10.60.10:FF:000024">
    <property type="entry name" value="Cytotoxin 1"/>
    <property type="match status" value="1"/>
</dbReference>
<dbReference type="Gene3D" id="2.10.60.10">
    <property type="entry name" value="CD59"/>
    <property type="match status" value="1"/>
</dbReference>
<dbReference type="InterPro" id="IPR003571">
    <property type="entry name" value="Snake_3FTx"/>
</dbReference>
<dbReference type="InterPro" id="IPR045860">
    <property type="entry name" value="Snake_toxin-like_sf"/>
</dbReference>
<dbReference type="InterPro" id="IPR018354">
    <property type="entry name" value="Snake_toxin_con_site"/>
</dbReference>
<dbReference type="InterPro" id="IPR054131">
    <property type="entry name" value="Toxin_cobra-type"/>
</dbReference>
<dbReference type="Pfam" id="PF21947">
    <property type="entry name" value="Toxin_cobra-type"/>
    <property type="match status" value="1"/>
</dbReference>
<dbReference type="SUPFAM" id="SSF57302">
    <property type="entry name" value="Snake toxin-like"/>
    <property type="match status" value="1"/>
</dbReference>
<dbReference type="PROSITE" id="PS00272">
    <property type="entry name" value="SNAKE_TOXIN"/>
    <property type="match status" value="1"/>
</dbReference>
<feature type="chain" id="PRO_0000093604" description="Short neurotoxin 3" evidence="3">
    <location>
        <begin position="1"/>
        <end position="62"/>
    </location>
</feature>
<feature type="disulfide bond" evidence="1">
    <location>
        <begin position="3"/>
        <end position="24"/>
    </location>
</feature>
<feature type="disulfide bond" evidence="1">
    <location>
        <begin position="17"/>
        <end position="41"/>
    </location>
</feature>
<feature type="disulfide bond" evidence="1">
    <location>
        <begin position="43"/>
        <end position="54"/>
    </location>
</feature>
<feature type="disulfide bond" evidence="1">
    <location>
        <begin position="55"/>
        <end position="60"/>
    </location>
</feature>
<reference key="1">
    <citation type="journal article" date="1977" name="Eur. J. Biochem.">
        <title>Amino acid sequences of neurotoxins I and III of the elapidae snake Naja mossambica massambica.</title>
        <authorList>
            <person name="Gregoire J."/>
            <person name="Rochat H."/>
        </authorList>
    </citation>
    <scope>PROTEIN SEQUENCE</scope>
    <scope>SUBCELLULAR LOCATION</scope>
    <source>
        <tissue>Venom</tissue>
    </source>
</reference>
<evidence type="ECO:0000250" key="1">
    <source>
        <dbReference type="UniProtKB" id="P0C1Z0"/>
    </source>
</evidence>
<evidence type="ECO:0000250" key="2">
    <source>
        <dbReference type="UniProtKB" id="P60775"/>
    </source>
</evidence>
<evidence type="ECO:0000269" key="3">
    <source>
    </source>
</evidence>
<evidence type="ECO:0000305" key="4"/>